<reference key="1">
    <citation type="journal article" date="2008" name="Proc. Natl. Acad. Sci. U.S.A.">
        <title>The genome of Clostridium kluyveri, a strict anaerobe with unique metabolic features.</title>
        <authorList>
            <person name="Seedorf H."/>
            <person name="Fricke W.F."/>
            <person name="Veith B."/>
            <person name="Brueggemann H."/>
            <person name="Liesegang H."/>
            <person name="Strittmatter A."/>
            <person name="Miethke M."/>
            <person name="Buckel W."/>
            <person name="Hinderberger J."/>
            <person name="Li F."/>
            <person name="Hagemeier C."/>
            <person name="Thauer R.K."/>
            <person name="Gottschalk G."/>
        </authorList>
    </citation>
    <scope>NUCLEOTIDE SEQUENCE [LARGE SCALE GENOMIC DNA]</scope>
    <source>
        <strain>ATCC 8527 / DSM 555 / NBRC 12016 / NCIMB 10680 / K1</strain>
    </source>
</reference>
<sequence>MYKLIYSVLIAFFIAMLEGPILIPLLHKFKFGQSIREDGPKTHLKKAGTPTMGGIIFILATFITMAVIVKKPSDEAMIALYAFIGFGIIGAIDDTLKIVRRKNLGLRAYQKMILLLAISGIFAYYSANNPYIGTSIIIPFKRDTWDLGVFYIPFIIVYFAATTNAVNLTDGLDGLATSVTLLVMTFLALVSFAMGHITLAVFCAILAGALLGFLKYNAFPAQIFMGDTGSLALGGAIGAVAMILKLPLLVIIIGGIYVLEALSVIFQVLSFKLTGKRIFKMAPIHHHFELSGWHETRVVSVFCIVTVILCLVGFLSL</sequence>
<feature type="chain" id="PRO_1000074538" description="Phospho-N-acetylmuramoyl-pentapeptide-transferase">
    <location>
        <begin position="1"/>
        <end position="317"/>
    </location>
</feature>
<feature type="transmembrane region" description="Helical" evidence="1">
    <location>
        <begin position="4"/>
        <end position="24"/>
    </location>
</feature>
<feature type="transmembrane region" description="Helical" evidence="1">
    <location>
        <begin position="49"/>
        <end position="69"/>
    </location>
</feature>
<feature type="transmembrane region" description="Helical" evidence="1">
    <location>
        <begin position="76"/>
        <end position="96"/>
    </location>
</feature>
<feature type="transmembrane region" description="Helical" evidence="1">
    <location>
        <begin position="112"/>
        <end position="132"/>
    </location>
</feature>
<feature type="transmembrane region" description="Helical" evidence="1">
    <location>
        <begin position="147"/>
        <end position="167"/>
    </location>
</feature>
<feature type="transmembrane region" description="Helical" evidence="1">
    <location>
        <begin position="186"/>
        <end position="206"/>
    </location>
</feature>
<feature type="transmembrane region" description="Helical" evidence="1">
    <location>
        <begin position="223"/>
        <end position="243"/>
    </location>
</feature>
<feature type="transmembrane region" description="Helical" evidence="1">
    <location>
        <begin position="246"/>
        <end position="266"/>
    </location>
</feature>
<feature type="transmembrane region" description="Helical" evidence="1">
    <location>
        <begin position="297"/>
        <end position="317"/>
    </location>
</feature>
<accession>A5N7E7</accession>
<keyword id="KW-0131">Cell cycle</keyword>
<keyword id="KW-0132">Cell division</keyword>
<keyword id="KW-1003">Cell membrane</keyword>
<keyword id="KW-0133">Cell shape</keyword>
<keyword id="KW-0961">Cell wall biogenesis/degradation</keyword>
<keyword id="KW-0460">Magnesium</keyword>
<keyword id="KW-0472">Membrane</keyword>
<keyword id="KW-0479">Metal-binding</keyword>
<keyword id="KW-0573">Peptidoglycan synthesis</keyword>
<keyword id="KW-1185">Reference proteome</keyword>
<keyword id="KW-0808">Transferase</keyword>
<keyword id="KW-0812">Transmembrane</keyword>
<keyword id="KW-1133">Transmembrane helix</keyword>
<gene>
    <name evidence="1" type="primary">mraY</name>
    <name type="ordered locus">CKL_1186</name>
</gene>
<organism>
    <name type="scientific">Clostridium kluyveri (strain ATCC 8527 / DSM 555 / NBRC 12016 / NCIMB 10680 / K1)</name>
    <dbReference type="NCBI Taxonomy" id="431943"/>
    <lineage>
        <taxon>Bacteria</taxon>
        <taxon>Bacillati</taxon>
        <taxon>Bacillota</taxon>
        <taxon>Clostridia</taxon>
        <taxon>Eubacteriales</taxon>
        <taxon>Clostridiaceae</taxon>
        <taxon>Clostridium</taxon>
    </lineage>
</organism>
<protein>
    <recommendedName>
        <fullName evidence="1">Phospho-N-acetylmuramoyl-pentapeptide-transferase</fullName>
        <ecNumber evidence="1">2.7.8.13</ecNumber>
    </recommendedName>
    <alternativeName>
        <fullName evidence="1">UDP-MurNAc-pentapeptide phosphotransferase</fullName>
    </alternativeName>
</protein>
<evidence type="ECO:0000255" key="1">
    <source>
        <dbReference type="HAMAP-Rule" id="MF_00038"/>
    </source>
</evidence>
<dbReference type="EC" id="2.7.8.13" evidence="1"/>
<dbReference type="EMBL" id="CP000673">
    <property type="protein sequence ID" value="EDK33228.1"/>
    <property type="molecule type" value="Genomic_DNA"/>
</dbReference>
<dbReference type="RefSeq" id="WP_012101567.1">
    <property type="nucleotide sequence ID" value="NC_009706.1"/>
</dbReference>
<dbReference type="SMR" id="A5N7E7"/>
<dbReference type="STRING" id="431943.CKL_1186"/>
<dbReference type="KEGG" id="ckl:CKL_1186"/>
<dbReference type="eggNOG" id="COG0472">
    <property type="taxonomic scope" value="Bacteria"/>
</dbReference>
<dbReference type="HOGENOM" id="CLU_023982_0_1_9"/>
<dbReference type="UniPathway" id="UPA00219"/>
<dbReference type="Proteomes" id="UP000002411">
    <property type="component" value="Chromosome"/>
</dbReference>
<dbReference type="GO" id="GO:0005886">
    <property type="term" value="C:plasma membrane"/>
    <property type="evidence" value="ECO:0007669"/>
    <property type="project" value="UniProtKB-SubCell"/>
</dbReference>
<dbReference type="GO" id="GO:0046872">
    <property type="term" value="F:metal ion binding"/>
    <property type="evidence" value="ECO:0007669"/>
    <property type="project" value="UniProtKB-KW"/>
</dbReference>
<dbReference type="GO" id="GO:0008963">
    <property type="term" value="F:phospho-N-acetylmuramoyl-pentapeptide-transferase activity"/>
    <property type="evidence" value="ECO:0007669"/>
    <property type="project" value="UniProtKB-UniRule"/>
</dbReference>
<dbReference type="GO" id="GO:0051992">
    <property type="term" value="F:UDP-N-acetylmuramoyl-L-alanyl-D-glutamyl-meso-2,6-diaminopimelyl-D-alanyl-D-alanine:undecaprenyl-phosphate transferase activity"/>
    <property type="evidence" value="ECO:0007669"/>
    <property type="project" value="RHEA"/>
</dbReference>
<dbReference type="GO" id="GO:0051301">
    <property type="term" value="P:cell division"/>
    <property type="evidence" value="ECO:0007669"/>
    <property type="project" value="UniProtKB-KW"/>
</dbReference>
<dbReference type="GO" id="GO:0071555">
    <property type="term" value="P:cell wall organization"/>
    <property type="evidence" value="ECO:0007669"/>
    <property type="project" value="UniProtKB-KW"/>
</dbReference>
<dbReference type="GO" id="GO:0009252">
    <property type="term" value="P:peptidoglycan biosynthetic process"/>
    <property type="evidence" value="ECO:0007669"/>
    <property type="project" value="UniProtKB-UniRule"/>
</dbReference>
<dbReference type="GO" id="GO:0008360">
    <property type="term" value="P:regulation of cell shape"/>
    <property type="evidence" value="ECO:0007669"/>
    <property type="project" value="UniProtKB-KW"/>
</dbReference>
<dbReference type="CDD" id="cd06852">
    <property type="entry name" value="GT_MraY"/>
    <property type="match status" value="1"/>
</dbReference>
<dbReference type="HAMAP" id="MF_00038">
    <property type="entry name" value="MraY"/>
    <property type="match status" value="1"/>
</dbReference>
<dbReference type="InterPro" id="IPR000715">
    <property type="entry name" value="Glycosyl_transferase_4"/>
</dbReference>
<dbReference type="InterPro" id="IPR003524">
    <property type="entry name" value="PNAcMuramoyl-5peptid_Trfase"/>
</dbReference>
<dbReference type="InterPro" id="IPR018480">
    <property type="entry name" value="PNAcMuramoyl-5peptid_Trfase_CS"/>
</dbReference>
<dbReference type="NCBIfam" id="TIGR00445">
    <property type="entry name" value="mraY"/>
    <property type="match status" value="1"/>
</dbReference>
<dbReference type="PANTHER" id="PTHR22926">
    <property type="entry name" value="PHOSPHO-N-ACETYLMURAMOYL-PENTAPEPTIDE-TRANSFERASE"/>
    <property type="match status" value="1"/>
</dbReference>
<dbReference type="PANTHER" id="PTHR22926:SF5">
    <property type="entry name" value="PHOSPHO-N-ACETYLMURAMOYL-PENTAPEPTIDE-TRANSFERASE HOMOLOG"/>
    <property type="match status" value="1"/>
</dbReference>
<dbReference type="Pfam" id="PF00953">
    <property type="entry name" value="Glycos_transf_4"/>
    <property type="match status" value="1"/>
</dbReference>
<dbReference type="Pfam" id="PF10555">
    <property type="entry name" value="MraY_sig1"/>
    <property type="match status" value="1"/>
</dbReference>
<dbReference type="PROSITE" id="PS01347">
    <property type="entry name" value="MRAY_1"/>
    <property type="match status" value="1"/>
</dbReference>
<dbReference type="PROSITE" id="PS01348">
    <property type="entry name" value="MRAY_2"/>
    <property type="match status" value="1"/>
</dbReference>
<name>MRAY_CLOK5</name>
<comment type="function">
    <text evidence="1">Catalyzes the initial step of the lipid cycle reactions in the biosynthesis of the cell wall peptidoglycan: transfers peptidoglycan precursor phospho-MurNAc-pentapeptide from UDP-MurNAc-pentapeptide onto the lipid carrier undecaprenyl phosphate, yielding undecaprenyl-pyrophosphoryl-MurNAc-pentapeptide, known as lipid I.</text>
</comment>
<comment type="catalytic activity">
    <reaction evidence="1">
        <text>UDP-N-acetyl-alpha-D-muramoyl-L-alanyl-gamma-D-glutamyl-meso-2,6-diaminopimeloyl-D-alanyl-D-alanine + di-trans,octa-cis-undecaprenyl phosphate = di-trans,octa-cis-undecaprenyl diphospho-N-acetyl-alpha-D-muramoyl-L-alanyl-D-glutamyl-meso-2,6-diaminopimeloyl-D-alanyl-D-alanine + UMP</text>
        <dbReference type="Rhea" id="RHEA:28386"/>
        <dbReference type="ChEBI" id="CHEBI:57865"/>
        <dbReference type="ChEBI" id="CHEBI:60392"/>
        <dbReference type="ChEBI" id="CHEBI:61386"/>
        <dbReference type="ChEBI" id="CHEBI:61387"/>
        <dbReference type="EC" id="2.7.8.13"/>
    </reaction>
</comment>
<comment type="cofactor">
    <cofactor evidence="1">
        <name>Mg(2+)</name>
        <dbReference type="ChEBI" id="CHEBI:18420"/>
    </cofactor>
</comment>
<comment type="pathway">
    <text evidence="1">Cell wall biogenesis; peptidoglycan biosynthesis.</text>
</comment>
<comment type="subcellular location">
    <subcellularLocation>
        <location evidence="1">Cell membrane</location>
        <topology evidence="1">Multi-pass membrane protein</topology>
    </subcellularLocation>
</comment>
<comment type="similarity">
    <text evidence="1">Belongs to the glycosyltransferase 4 family. MraY subfamily.</text>
</comment>
<proteinExistence type="inferred from homology"/>